<reference key="1">
    <citation type="journal article" date="2015" name="Genome Announc.">
        <title>Genome sequence of the AIDS-associated pathogen Penicillium marneffei (ATCC18224) and its near taxonomic relative Talaromyces stipitatus (ATCC10500).</title>
        <authorList>
            <person name="Nierman W.C."/>
            <person name="Fedorova-Abrams N.D."/>
            <person name="Andrianopoulos A."/>
        </authorList>
    </citation>
    <scope>NUCLEOTIDE SEQUENCE [LARGE SCALE GENOMIC DNA]</scope>
    <source>
        <strain>ATCC 10500 / CBS 375.48 / QM 6759 / NRRL 1006</strain>
    </source>
</reference>
<reference key="2">
    <citation type="journal article" date="1997" name="J. Antibiot.">
        <title>CP-225,917 and CP-263,114, novel Ras farnesylation inhibitors from an unidentified fungus. I. Taxonomy, fermentation, isolation, and biochemical properties.</title>
        <authorList>
            <person name="Dabrah T.T."/>
            <person name="Harwood H.J. Jr."/>
            <person name="Huang L.H."/>
            <person name="Jankovich N.D."/>
            <person name="Kaneko T."/>
            <person name="Li J.C."/>
            <person name="Lindsey S."/>
            <person name="Moshier P.M."/>
            <person name="Subashi T.A."/>
            <person name="Therrien M."/>
            <person name="Watts P.C."/>
        </authorList>
    </citation>
    <scope>BIOTECHNOLOGY</scope>
</reference>
<reference key="3">
    <citation type="journal article" date="2015" name="Org. Lett.">
        <title>Biosynthetic study on antihypercholesterolemic agent phomoidride: general biogenesis of fungal dimeric anhydrides.</title>
        <authorList>
            <person name="Fujii R."/>
            <person name="Matsu Y."/>
            <person name="Minami A."/>
            <person name="Nagamine S."/>
            <person name="Takeuchi I."/>
            <person name="Gomi K."/>
            <person name="Oikawa H."/>
        </authorList>
    </citation>
    <scope>IDENTIFICATION</scope>
    <scope>FUNCTION</scope>
</reference>
<reference key="4">
    <citation type="journal article" date="2022" name="J. Am. Chem. Soc.">
        <title>Elucidation of late-stage biosynthesis of phomoidride: proposal of cyclization mechanism affording characteristic nine-membered ring of fungal dimeric anhydride.</title>
        <authorList>
            <person name="Yamamoto S."/>
            <person name="Matsuyama T."/>
            <person name="Ozaki T."/>
            <person name="Takino J."/>
            <person name="Sato H."/>
            <person name="Uchiyama M."/>
            <person name="Minami A."/>
            <person name="Oikawa H."/>
        </authorList>
    </citation>
    <scope>FUNCTION</scope>
</reference>
<accession>B8MKY9</accession>
<sequence length="243" mass="27005">MPDGIVASEAKDNTNNNLVHSFLGPKFPAASESSIMWFILRCLEWTLAKLLYRRRGYDHDLFYKGLAFGKYPNPTFTVTSPDCGPTGAKLGVEYSQWGSGKVPQLTWPVSGIEVKEYLIISEDPDAPLGHSNVHGIYCFVPGNKTGFGPDDLELLGEDKNGLKQISSGYLVGKNRRNTVYIAPRPPLGHGPHRYFFEIVALSQPLDPEKLSPVPTKQELSDMIIGKVCGWGLWTATFEQKWSM</sequence>
<keyword id="KW-1185">Reference proteome</keyword>
<protein>
    <recommendedName>
        <fullName evidence="4">Phomoidride biosynthesis cluster protein B</fullName>
    </recommendedName>
</protein>
<gene>
    <name evidence="4" type="primary">tstB</name>
    <name type="ORF">TSTA_048450</name>
</gene>
<dbReference type="EMBL" id="EQ962657">
    <property type="protein sequence ID" value="EED15405.1"/>
    <property type="molecule type" value="Genomic_DNA"/>
</dbReference>
<dbReference type="RefSeq" id="XP_002485358.1">
    <property type="nucleotide sequence ID" value="XM_002485313.1"/>
</dbReference>
<dbReference type="SMR" id="B8MKY9"/>
<dbReference type="STRING" id="441959.B8MKY9"/>
<dbReference type="GeneID" id="8107027"/>
<dbReference type="VEuPathDB" id="FungiDB:TSTA_048450"/>
<dbReference type="eggNOG" id="ENOG502SQR1">
    <property type="taxonomic scope" value="Eukaryota"/>
</dbReference>
<dbReference type="HOGENOM" id="CLU_083918_1_0_1"/>
<dbReference type="InParanoid" id="B8MKY9"/>
<dbReference type="OMA" id="YFFELIA"/>
<dbReference type="OrthoDB" id="10251855at2759"/>
<dbReference type="PhylomeDB" id="B8MKY9"/>
<dbReference type="Proteomes" id="UP000001745">
    <property type="component" value="Unassembled WGS sequence"/>
</dbReference>
<dbReference type="CDD" id="cd00457">
    <property type="entry name" value="PEBP"/>
    <property type="match status" value="1"/>
</dbReference>
<dbReference type="Gene3D" id="3.90.280.10">
    <property type="entry name" value="PEBP-like"/>
    <property type="match status" value="1"/>
</dbReference>
<dbReference type="InterPro" id="IPR008914">
    <property type="entry name" value="PEBP"/>
</dbReference>
<dbReference type="InterPro" id="IPR036610">
    <property type="entry name" value="PEBP-like_sf"/>
</dbReference>
<dbReference type="InterPro" id="IPR049556">
    <property type="entry name" value="PhiB"/>
</dbReference>
<dbReference type="Pfam" id="PF01161">
    <property type="entry name" value="PBP"/>
    <property type="match status" value="1"/>
</dbReference>
<dbReference type="SUPFAM" id="SSF49777">
    <property type="entry name" value="PEBP-like"/>
    <property type="match status" value="1"/>
</dbReference>
<organism>
    <name type="scientific">Talaromyces stipitatus (strain ATCC 10500 / CBS 375.48 / QM 6759 / NRRL 1006)</name>
    <name type="common">Penicillium stipitatum</name>
    <dbReference type="NCBI Taxonomy" id="441959"/>
    <lineage>
        <taxon>Eukaryota</taxon>
        <taxon>Fungi</taxon>
        <taxon>Dikarya</taxon>
        <taxon>Ascomycota</taxon>
        <taxon>Pezizomycotina</taxon>
        <taxon>Eurotiomycetes</taxon>
        <taxon>Eurotiomycetidae</taxon>
        <taxon>Eurotiales</taxon>
        <taxon>Trichocomaceae</taxon>
        <taxon>Talaromyces</taxon>
        <taxon>Talaromyces sect. Talaromyces</taxon>
    </lineage>
</organism>
<name>TSTB_TALSN</name>
<feature type="chain" id="PRO_0000458931" description="Phomoidride biosynthesis cluster protein B">
    <location>
        <begin position="1"/>
        <end position="243"/>
    </location>
</feature>
<proteinExistence type="evidence at protein level"/>
<evidence type="ECO:0000269" key="1">
    <source>
    </source>
</evidence>
<evidence type="ECO:0000269" key="2">
    <source>
    </source>
</evidence>
<evidence type="ECO:0000269" key="3">
    <source>
    </source>
</evidence>
<evidence type="ECO:0000303" key="4">
    <source>
    </source>
</evidence>
<evidence type="ECO:0000305" key="5"/>
<comment type="function">
    <text evidence="1 2">Phosphatidylethanolamine-binding protein; part of the gene cluster that mediates the biosynthesis of the antihypercholesterolemic agents phomoidrides which are dimeric anhydrides (PubMed:26558485, PubMed:36374185). Within the pathway, tstB is not essential for dimerization and its function has still to be determined (PubMed:36374185). The pathway begins with the highly reducing polyketide synthase tstA that catalyzes the formation of a C12-fatty acyl-ACP, starting from one acetate and 5 malonate units. The hydrolase tstM is involved in the release of the C12-fatty acyl chain from phiA. The alkylcitrate synthase (ACS) tstJ and the alkylcitrate dehydratase (ACDH) tstI then give rise to decarboxylated monomeric anhydrides by coupling the C12-fatty acyl chain with oxalacetic acid. The cyclase tstC is responsible for the dimerization of the monomeric anhydrides which leads to the production of prephomoidride that contains the characteristic bicyclo[4.3.1]deca-1,6-diene system of phomoidrides. Iterative oxidation catalyzed by the alpha-ketoglutarate-dependent dioxygenase tstK produced then phomoidride A. Finally, the methyltransferase tstE converts phomoidride A to phomoidride B via an acetalization reaction. The phosphatidylethanolamine-binding protein tstB and tstN are not essential for dimerization and their functions have still to be determined (PubMed:36374185).</text>
</comment>
<comment type="biotechnology">
    <text evidence="3">Phomoidrides A and B (also known as CP-225,917 and CP-263,114) are potent inhibitors of Ras farnesyltransferase and squalene synthase (PubMed:9066758). CP-225,917 and CP-263,114 inhibit Ras farnesyl transferase from rat brain with IC(50) values of 6 uM and 20 uoM, respectively (PubMed:9066758). CP-225,917 inhibits squalene synthase with an IC(50) value of 43 uM and CP-263,114 with an IC(50) of 160 uM (PubMed:9066758).</text>
</comment>
<comment type="similarity">
    <text evidence="5">Belongs to the tstB family.</text>
</comment>